<gene>
    <name evidence="1" type="primary">rplS</name>
    <name type="ordered locus">Dtpsy_2700</name>
</gene>
<reference key="1">
    <citation type="submission" date="2009-01" db="EMBL/GenBank/DDBJ databases">
        <title>Complete sequence of Diaphorobacter sp. TPSY.</title>
        <authorList>
            <consortium name="US DOE Joint Genome Institute"/>
            <person name="Lucas S."/>
            <person name="Copeland A."/>
            <person name="Lapidus A."/>
            <person name="Glavina del Rio T."/>
            <person name="Tice H."/>
            <person name="Bruce D."/>
            <person name="Goodwin L."/>
            <person name="Pitluck S."/>
            <person name="Chertkov O."/>
            <person name="Brettin T."/>
            <person name="Detter J.C."/>
            <person name="Han C."/>
            <person name="Larimer F."/>
            <person name="Land M."/>
            <person name="Hauser L."/>
            <person name="Kyrpides N."/>
            <person name="Mikhailova N."/>
            <person name="Coates J.D."/>
        </authorList>
    </citation>
    <scope>NUCLEOTIDE SEQUENCE [LARGE SCALE GENOMIC DNA]</scope>
    <source>
        <strain>TPSY</strain>
    </source>
</reference>
<keyword id="KW-1185">Reference proteome</keyword>
<keyword id="KW-0687">Ribonucleoprotein</keyword>
<keyword id="KW-0689">Ribosomal protein</keyword>
<proteinExistence type="inferred from homology"/>
<protein>
    <recommendedName>
        <fullName evidence="1">Large ribosomal subunit protein bL19</fullName>
    </recommendedName>
    <alternativeName>
        <fullName evidence="2">50S ribosomal protein L19</fullName>
    </alternativeName>
</protein>
<comment type="function">
    <text evidence="1">This protein is located at the 30S-50S ribosomal subunit interface and may play a role in the structure and function of the aminoacyl-tRNA binding site.</text>
</comment>
<comment type="similarity">
    <text evidence="1">Belongs to the bacterial ribosomal protein bL19 family.</text>
</comment>
<organism>
    <name type="scientific">Acidovorax ebreus (strain TPSY)</name>
    <name type="common">Diaphorobacter sp. (strain TPSY)</name>
    <dbReference type="NCBI Taxonomy" id="535289"/>
    <lineage>
        <taxon>Bacteria</taxon>
        <taxon>Pseudomonadati</taxon>
        <taxon>Pseudomonadota</taxon>
        <taxon>Betaproteobacteria</taxon>
        <taxon>Burkholderiales</taxon>
        <taxon>Comamonadaceae</taxon>
        <taxon>Diaphorobacter</taxon>
    </lineage>
</organism>
<accession>B9ME96</accession>
<evidence type="ECO:0000255" key="1">
    <source>
        <dbReference type="HAMAP-Rule" id="MF_00402"/>
    </source>
</evidence>
<evidence type="ECO:0000305" key="2"/>
<name>RL19_ACIET</name>
<dbReference type="EMBL" id="CP001392">
    <property type="protein sequence ID" value="ACM34135.1"/>
    <property type="molecule type" value="Genomic_DNA"/>
</dbReference>
<dbReference type="RefSeq" id="WP_011806470.1">
    <property type="nucleotide sequence ID" value="NC_011992.1"/>
</dbReference>
<dbReference type="SMR" id="B9ME96"/>
<dbReference type="GeneID" id="84680543"/>
<dbReference type="KEGG" id="dia:Dtpsy_2700"/>
<dbReference type="eggNOG" id="COG0335">
    <property type="taxonomic scope" value="Bacteria"/>
</dbReference>
<dbReference type="HOGENOM" id="CLU_103507_1_0_4"/>
<dbReference type="Proteomes" id="UP000000450">
    <property type="component" value="Chromosome"/>
</dbReference>
<dbReference type="GO" id="GO:0022625">
    <property type="term" value="C:cytosolic large ribosomal subunit"/>
    <property type="evidence" value="ECO:0007669"/>
    <property type="project" value="TreeGrafter"/>
</dbReference>
<dbReference type="GO" id="GO:0003735">
    <property type="term" value="F:structural constituent of ribosome"/>
    <property type="evidence" value="ECO:0007669"/>
    <property type="project" value="InterPro"/>
</dbReference>
<dbReference type="GO" id="GO:0006412">
    <property type="term" value="P:translation"/>
    <property type="evidence" value="ECO:0007669"/>
    <property type="project" value="UniProtKB-UniRule"/>
</dbReference>
<dbReference type="FunFam" id="2.30.30.790:FF:000001">
    <property type="entry name" value="50S ribosomal protein L19"/>
    <property type="match status" value="1"/>
</dbReference>
<dbReference type="Gene3D" id="2.30.30.790">
    <property type="match status" value="1"/>
</dbReference>
<dbReference type="HAMAP" id="MF_00402">
    <property type="entry name" value="Ribosomal_bL19"/>
    <property type="match status" value="1"/>
</dbReference>
<dbReference type="InterPro" id="IPR001857">
    <property type="entry name" value="Ribosomal_bL19"/>
</dbReference>
<dbReference type="InterPro" id="IPR018257">
    <property type="entry name" value="Ribosomal_bL19_CS"/>
</dbReference>
<dbReference type="InterPro" id="IPR038657">
    <property type="entry name" value="Ribosomal_bL19_sf"/>
</dbReference>
<dbReference type="InterPro" id="IPR008991">
    <property type="entry name" value="Translation_prot_SH3-like_sf"/>
</dbReference>
<dbReference type="NCBIfam" id="TIGR01024">
    <property type="entry name" value="rplS_bact"/>
    <property type="match status" value="1"/>
</dbReference>
<dbReference type="PANTHER" id="PTHR15680:SF9">
    <property type="entry name" value="LARGE RIBOSOMAL SUBUNIT PROTEIN BL19M"/>
    <property type="match status" value="1"/>
</dbReference>
<dbReference type="PANTHER" id="PTHR15680">
    <property type="entry name" value="RIBOSOMAL PROTEIN L19"/>
    <property type="match status" value="1"/>
</dbReference>
<dbReference type="Pfam" id="PF01245">
    <property type="entry name" value="Ribosomal_L19"/>
    <property type="match status" value="1"/>
</dbReference>
<dbReference type="PIRSF" id="PIRSF002191">
    <property type="entry name" value="Ribosomal_L19"/>
    <property type="match status" value="1"/>
</dbReference>
<dbReference type="PRINTS" id="PR00061">
    <property type="entry name" value="RIBOSOMALL19"/>
</dbReference>
<dbReference type="SUPFAM" id="SSF50104">
    <property type="entry name" value="Translation proteins SH3-like domain"/>
    <property type="match status" value="1"/>
</dbReference>
<dbReference type="PROSITE" id="PS01015">
    <property type="entry name" value="RIBOSOMAL_L19"/>
    <property type="match status" value="1"/>
</dbReference>
<sequence length="127" mass="14156">MNLIQILEQEEIARLNKTIPSFAPGDTVIVNVNVVEGTRKRVQAYEGVVIAKRNRGLNSGFTVRKISSGEGVERTFQTYSPLIASIEVKRRGDVRRAKLYYLRERSGKSARIKEKLPSRVKAAAVAA</sequence>
<feature type="chain" id="PRO_1000193825" description="Large ribosomal subunit protein bL19">
    <location>
        <begin position="1"/>
        <end position="127"/>
    </location>
</feature>